<proteinExistence type="evidence at protein level"/>
<gene>
    <name type="primary">clp</name>
    <name type="ordered locus">XAC0483</name>
</gene>
<reference key="1">
    <citation type="journal article" date="2002" name="Nature">
        <title>Comparison of the genomes of two Xanthomonas pathogens with differing host specificities.</title>
        <authorList>
            <person name="da Silva A.C.R."/>
            <person name="Ferro J.A."/>
            <person name="Reinach F.C."/>
            <person name="Farah C.S."/>
            <person name="Furlan L.R."/>
            <person name="Quaggio R.B."/>
            <person name="Monteiro-Vitorello C.B."/>
            <person name="Van Sluys M.A."/>
            <person name="Almeida N.F. Jr."/>
            <person name="Alves L.M.C."/>
            <person name="do Amaral A.M."/>
            <person name="Bertolini M.C."/>
            <person name="Camargo L.E.A."/>
            <person name="Camarotte G."/>
            <person name="Cannavan F."/>
            <person name="Cardozo J."/>
            <person name="Chambergo F."/>
            <person name="Ciapina L.P."/>
            <person name="Cicarelli R.M.B."/>
            <person name="Coutinho L.L."/>
            <person name="Cursino-Santos J.R."/>
            <person name="El-Dorry H."/>
            <person name="Faria J.B."/>
            <person name="Ferreira A.J.S."/>
            <person name="Ferreira R.C.C."/>
            <person name="Ferro M.I.T."/>
            <person name="Formighieri E.F."/>
            <person name="Franco M.C."/>
            <person name="Greggio C.C."/>
            <person name="Gruber A."/>
            <person name="Katsuyama A.M."/>
            <person name="Kishi L.T."/>
            <person name="Leite R.P."/>
            <person name="Lemos E.G.M."/>
            <person name="Lemos M.V.F."/>
            <person name="Locali E.C."/>
            <person name="Machado M.A."/>
            <person name="Madeira A.M.B.N."/>
            <person name="Martinez-Rossi N.M."/>
            <person name="Martins E.C."/>
            <person name="Meidanis J."/>
            <person name="Menck C.F.M."/>
            <person name="Miyaki C.Y."/>
            <person name="Moon D.H."/>
            <person name="Moreira L.M."/>
            <person name="Novo M.T.M."/>
            <person name="Okura V.K."/>
            <person name="Oliveira M.C."/>
            <person name="Oliveira V.R."/>
            <person name="Pereira H.A."/>
            <person name="Rossi A."/>
            <person name="Sena J.A.D."/>
            <person name="Silva C."/>
            <person name="de Souza R.F."/>
            <person name="Spinola L.A.F."/>
            <person name="Takita M.A."/>
            <person name="Tamura R.E."/>
            <person name="Teixeira E.C."/>
            <person name="Tezza R.I.D."/>
            <person name="Trindade dos Santos M."/>
            <person name="Truffi D."/>
            <person name="Tsai S.M."/>
            <person name="White F.F."/>
            <person name="Setubal J.C."/>
            <person name="Kitajima J.P."/>
        </authorList>
    </citation>
    <scope>NUCLEOTIDE SEQUENCE [LARGE SCALE GENOMIC DNA]</scope>
    <source>
        <strain>306</strain>
    </source>
</reference>
<reference key="2">
    <citation type="journal article" date="2009" name="J. Bacteriol.">
        <title>Cyclic di-GMP allosterically inhibits the CRP-like protein (Clp) of Xanthomonas axonopodis pv. citri.</title>
        <authorList>
            <person name="Leduc J.L."/>
            <person name="Roberts G.P."/>
        </authorList>
    </citation>
    <scope>DNA-BINDING</scope>
    <scope>ACTIVITY REGULATION</scope>
    <source>
        <strain>306</strain>
    </source>
</reference>
<feature type="chain" id="PRO_0000405701" description="CRP-like protein Clp">
    <location>
        <begin position="1"/>
        <end position="230"/>
    </location>
</feature>
<feature type="domain" description="HTH crp-type" evidence="2">
    <location>
        <begin position="158"/>
        <end position="230"/>
    </location>
</feature>
<feature type="DNA-binding region" description="H-T-H motif" evidence="2">
    <location>
        <begin position="190"/>
        <end position="209"/>
    </location>
</feature>
<feature type="binding site">
    <location>
        <begin position="18"/>
        <end position="139"/>
    </location>
    <ligand>
        <name>a nucleoside 3',5'-cyclic phosphate</name>
        <dbReference type="ChEBI" id="CHEBI:58464"/>
    </ligand>
</feature>
<keyword id="KW-0010">Activator</keyword>
<keyword id="KW-0021">Allosteric enzyme</keyword>
<keyword id="KW-0973">c-di-GMP</keyword>
<keyword id="KW-0963">Cytoplasm</keyword>
<keyword id="KW-0238">DNA-binding</keyword>
<keyword id="KW-0678">Repressor</keyword>
<keyword id="KW-0804">Transcription</keyword>
<keyword id="KW-0805">Transcription regulation</keyword>
<keyword id="KW-0843">Virulence</keyword>
<accession>Q8PQ45</accession>
<protein>
    <recommendedName>
        <fullName>CRP-like protein Clp</fullName>
    </recommendedName>
    <alternativeName>
        <fullName>Catabolite activation-like protein</fullName>
        <shortName>CAP-like</shortName>
    </alternativeName>
</protein>
<dbReference type="EMBL" id="AE008923">
    <property type="protein sequence ID" value="AAM35374.1"/>
    <property type="molecule type" value="Genomic_DNA"/>
</dbReference>
<dbReference type="SMR" id="Q8PQ45"/>
<dbReference type="KEGG" id="xac:XAC0483"/>
<dbReference type="eggNOG" id="COG0664">
    <property type="taxonomic scope" value="Bacteria"/>
</dbReference>
<dbReference type="HOGENOM" id="CLU_075053_3_5_6"/>
<dbReference type="Proteomes" id="UP000000576">
    <property type="component" value="Chromosome"/>
</dbReference>
<dbReference type="GO" id="GO:0005829">
    <property type="term" value="C:cytosol"/>
    <property type="evidence" value="ECO:0007669"/>
    <property type="project" value="TreeGrafter"/>
</dbReference>
<dbReference type="GO" id="GO:0003824">
    <property type="term" value="F:catalytic activity"/>
    <property type="evidence" value="ECO:0007669"/>
    <property type="project" value="UniProtKB-KW"/>
</dbReference>
<dbReference type="GO" id="GO:0035438">
    <property type="term" value="F:cyclic-di-GMP binding"/>
    <property type="evidence" value="ECO:0000314"/>
    <property type="project" value="UniProtKB"/>
</dbReference>
<dbReference type="GO" id="GO:0003677">
    <property type="term" value="F:DNA binding"/>
    <property type="evidence" value="ECO:0000314"/>
    <property type="project" value="UniProtKB"/>
</dbReference>
<dbReference type="GO" id="GO:0003700">
    <property type="term" value="F:DNA-binding transcription factor activity"/>
    <property type="evidence" value="ECO:0000250"/>
    <property type="project" value="UniProtKB"/>
</dbReference>
<dbReference type="GO" id="GO:0046983">
    <property type="term" value="F:protein dimerization activity"/>
    <property type="evidence" value="ECO:0000250"/>
    <property type="project" value="UniProtKB"/>
</dbReference>
<dbReference type="GO" id="GO:0006355">
    <property type="term" value="P:regulation of DNA-templated transcription"/>
    <property type="evidence" value="ECO:0000250"/>
    <property type="project" value="UniProtKB"/>
</dbReference>
<dbReference type="CDD" id="cd00038">
    <property type="entry name" value="CAP_ED"/>
    <property type="match status" value="1"/>
</dbReference>
<dbReference type="FunFam" id="1.10.10.10:FF:000006">
    <property type="entry name" value="cAMP-activated global transcriptional regulator CRP"/>
    <property type="match status" value="1"/>
</dbReference>
<dbReference type="FunFam" id="2.60.120.10:FF:000100">
    <property type="entry name" value="CRP-like protein Clp"/>
    <property type="match status" value="1"/>
</dbReference>
<dbReference type="Gene3D" id="2.60.120.10">
    <property type="entry name" value="Jelly Rolls"/>
    <property type="match status" value="1"/>
</dbReference>
<dbReference type="Gene3D" id="1.10.10.10">
    <property type="entry name" value="Winged helix-like DNA-binding domain superfamily/Winged helix DNA-binding domain"/>
    <property type="match status" value="1"/>
</dbReference>
<dbReference type="InterPro" id="IPR000595">
    <property type="entry name" value="cNMP-bd_dom"/>
</dbReference>
<dbReference type="InterPro" id="IPR018490">
    <property type="entry name" value="cNMP-bd_dom_sf"/>
</dbReference>
<dbReference type="InterPro" id="IPR050397">
    <property type="entry name" value="Env_Response_Regulators"/>
</dbReference>
<dbReference type="InterPro" id="IPR012318">
    <property type="entry name" value="HTH_CRP"/>
</dbReference>
<dbReference type="InterPro" id="IPR014710">
    <property type="entry name" value="RmlC-like_jellyroll"/>
</dbReference>
<dbReference type="InterPro" id="IPR018335">
    <property type="entry name" value="Tscrpt_reg_HTH_Crp-type_CS"/>
</dbReference>
<dbReference type="InterPro" id="IPR036388">
    <property type="entry name" value="WH-like_DNA-bd_sf"/>
</dbReference>
<dbReference type="InterPro" id="IPR036390">
    <property type="entry name" value="WH_DNA-bd_sf"/>
</dbReference>
<dbReference type="NCBIfam" id="NF008732">
    <property type="entry name" value="PRK11753.1"/>
    <property type="match status" value="1"/>
</dbReference>
<dbReference type="PANTHER" id="PTHR24567">
    <property type="entry name" value="CRP FAMILY TRANSCRIPTIONAL REGULATORY PROTEIN"/>
    <property type="match status" value="1"/>
</dbReference>
<dbReference type="PANTHER" id="PTHR24567:SF68">
    <property type="entry name" value="DNA-BINDING TRANSCRIPTIONAL DUAL REGULATOR CRP"/>
    <property type="match status" value="1"/>
</dbReference>
<dbReference type="Pfam" id="PF00027">
    <property type="entry name" value="cNMP_binding"/>
    <property type="match status" value="1"/>
</dbReference>
<dbReference type="Pfam" id="PF00325">
    <property type="entry name" value="Crp"/>
    <property type="match status" value="1"/>
</dbReference>
<dbReference type="PRINTS" id="PR00034">
    <property type="entry name" value="HTHCRP"/>
</dbReference>
<dbReference type="SMART" id="SM00100">
    <property type="entry name" value="cNMP"/>
    <property type="match status" value="1"/>
</dbReference>
<dbReference type="SMART" id="SM00419">
    <property type="entry name" value="HTH_CRP"/>
    <property type="match status" value="1"/>
</dbReference>
<dbReference type="SUPFAM" id="SSF51206">
    <property type="entry name" value="cAMP-binding domain-like"/>
    <property type="match status" value="1"/>
</dbReference>
<dbReference type="SUPFAM" id="SSF46785">
    <property type="entry name" value="Winged helix' DNA-binding domain"/>
    <property type="match status" value="1"/>
</dbReference>
<dbReference type="PROSITE" id="PS50042">
    <property type="entry name" value="CNMP_BINDING_3"/>
    <property type="match status" value="1"/>
</dbReference>
<dbReference type="PROSITE" id="PS00042">
    <property type="entry name" value="HTH_CRP_1"/>
    <property type="match status" value="1"/>
</dbReference>
<dbReference type="PROSITE" id="PS51063">
    <property type="entry name" value="HTH_CRP_2"/>
    <property type="match status" value="1"/>
</dbReference>
<evidence type="ECO:0000250" key="1"/>
<evidence type="ECO:0000255" key="2">
    <source>
        <dbReference type="PROSITE-ProRule" id="PRU00387"/>
    </source>
</evidence>
<evidence type="ECO:0000269" key="3">
    <source>
    </source>
</evidence>
<evidence type="ECO:0000305" key="4"/>
<name>CLP_XANAC</name>
<sequence>MSPGNTTVVTTTVRNATPSLALDAGTIERFLAHSHRRRYPTRTDVFRPGDPAGTLYYVISGSVSIIAEEDDDRELVLGYFGSGEFVGEMGLFIESDTREVILRTRTQCELAEISYERLQQLFQTSLSPDAPKILYAIGVQLSKRLLDTTRKASRLAFLDVTDRIVRTLHDLAKEPEAMSHPQGTQLRVSRQELARLVGCSREMAGRVLKKLQADGLLHARGKTVVLYGTR</sequence>
<comment type="function">
    <text evidence="1">Global transcriptional regulator that regulates virulence factors production by activating or repressing the expression of a large set of genes in diffusible signal factor (DSF) pathway.</text>
</comment>
<comment type="activity regulation">
    <text evidence="3">Allosterically inhibited by cyclic di-GMP (c-di-GMP), which binds to Clp and abolishes its ability to bind its target gene promoter.</text>
</comment>
<comment type="subunit">
    <text evidence="1">Homodimer.</text>
</comment>
<comment type="subcellular location">
    <subcellularLocation>
        <location evidence="4">Cytoplasm</location>
    </subcellularLocation>
</comment>
<comment type="domain">
    <text evidence="1">Binding of c-di-GMP appears to trigger the active Clp conformation into an open form or inactive state, hence abolishing its DNA-binding ability.</text>
</comment>
<organism>
    <name type="scientific">Xanthomonas axonopodis pv. citri (strain 306)</name>
    <dbReference type="NCBI Taxonomy" id="190486"/>
    <lineage>
        <taxon>Bacteria</taxon>
        <taxon>Pseudomonadati</taxon>
        <taxon>Pseudomonadota</taxon>
        <taxon>Gammaproteobacteria</taxon>
        <taxon>Lysobacterales</taxon>
        <taxon>Lysobacteraceae</taxon>
        <taxon>Xanthomonas</taxon>
    </lineage>
</organism>